<protein>
    <recommendedName>
        <fullName evidence="1">Small ribosomal subunit protein bS18</fullName>
    </recommendedName>
    <alternativeName>
        <fullName evidence="2">30S ribosomal protein S18</fullName>
    </alternativeName>
</protein>
<accession>Q83IC1</accession>
<proteinExistence type="inferred from homology"/>
<organism>
    <name type="scientific">Tropheryma whipplei (strain TW08/27)</name>
    <name type="common">Whipple's bacillus</name>
    <dbReference type="NCBI Taxonomy" id="218496"/>
    <lineage>
        <taxon>Bacteria</taxon>
        <taxon>Bacillati</taxon>
        <taxon>Actinomycetota</taxon>
        <taxon>Actinomycetes</taxon>
        <taxon>Micrococcales</taxon>
        <taxon>Tropherymataceae</taxon>
        <taxon>Tropheryma</taxon>
    </lineage>
</organism>
<evidence type="ECO:0000255" key="1">
    <source>
        <dbReference type="HAMAP-Rule" id="MF_00270"/>
    </source>
</evidence>
<evidence type="ECO:0000305" key="2"/>
<dbReference type="EMBL" id="BX251410">
    <property type="protein sequence ID" value="CAD66798.1"/>
    <property type="molecule type" value="Genomic_DNA"/>
</dbReference>
<dbReference type="SMR" id="Q83IC1"/>
<dbReference type="KEGG" id="tws:TW115"/>
<dbReference type="HOGENOM" id="CLU_148710_1_0_11"/>
<dbReference type="GO" id="GO:0022627">
    <property type="term" value="C:cytosolic small ribosomal subunit"/>
    <property type="evidence" value="ECO:0007669"/>
    <property type="project" value="TreeGrafter"/>
</dbReference>
<dbReference type="GO" id="GO:0070181">
    <property type="term" value="F:small ribosomal subunit rRNA binding"/>
    <property type="evidence" value="ECO:0007669"/>
    <property type="project" value="TreeGrafter"/>
</dbReference>
<dbReference type="GO" id="GO:0003735">
    <property type="term" value="F:structural constituent of ribosome"/>
    <property type="evidence" value="ECO:0007669"/>
    <property type="project" value="InterPro"/>
</dbReference>
<dbReference type="GO" id="GO:0006412">
    <property type="term" value="P:translation"/>
    <property type="evidence" value="ECO:0007669"/>
    <property type="project" value="UniProtKB-UniRule"/>
</dbReference>
<dbReference type="Gene3D" id="4.10.640.10">
    <property type="entry name" value="Ribosomal protein S18"/>
    <property type="match status" value="1"/>
</dbReference>
<dbReference type="HAMAP" id="MF_00270">
    <property type="entry name" value="Ribosomal_bS18"/>
    <property type="match status" value="1"/>
</dbReference>
<dbReference type="InterPro" id="IPR001648">
    <property type="entry name" value="Ribosomal_bS18"/>
</dbReference>
<dbReference type="InterPro" id="IPR018275">
    <property type="entry name" value="Ribosomal_bS18_CS"/>
</dbReference>
<dbReference type="InterPro" id="IPR036870">
    <property type="entry name" value="Ribosomal_bS18_sf"/>
</dbReference>
<dbReference type="NCBIfam" id="TIGR00165">
    <property type="entry name" value="S18"/>
    <property type="match status" value="1"/>
</dbReference>
<dbReference type="PANTHER" id="PTHR13479">
    <property type="entry name" value="30S RIBOSOMAL PROTEIN S18"/>
    <property type="match status" value="1"/>
</dbReference>
<dbReference type="PANTHER" id="PTHR13479:SF40">
    <property type="entry name" value="SMALL RIBOSOMAL SUBUNIT PROTEIN BS18M"/>
    <property type="match status" value="1"/>
</dbReference>
<dbReference type="Pfam" id="PF01084">
    <property type="entry name" value="Ribosomal_S18"/>
    <property type="match status" value="1"/>
</dbReference>
<dbReference type="PRINTS" id="PR00974">
    <property type="entry name" value="RIBOSOMALS18"/>
</dbReference>
<dbReference type="SUPFAM" id="SSF46911">
    <property type="entry name" value="Ribosomal protein S18"/>
    <property type="match status" value="1"/>
</dbReference>
<dbReference type="PROSITE" id="PS00057">
    <property type="entry name" value="RIBOSOMAL_S18"/>
    <property type="match status" value="1"/>
</dbReference>
<gene>
    <name evidence="1" type="primary">rpsR</name>
    <name type="ordered locus">TW115</name>
</gene>
<feature type="chain" id="PRO_0000111255" description="Small ribosomal subunit protein bS18">
    <location>
        <begin position="1"/>
        <end position="83"/>
    </location>
</feature>
<reference key="1">
    <citation type="journal article" date="2003" name="Lancet">
        <title>Sequencing and analysis of the genome of the Whipple's disease bacterium Tropheryma whipplei.</title>
        <authorList>
            <person name="Bentley S.D."/>
            <person name="Maiwald M."/>
            <person name="Murphy L.D."/>
            <person name="Pallen M.J."/>
            <person name="Yeats C.A."/>
            <person name="Dover L.G."/>
            <person name="Norbertczak H.T."/>
            <person name="Besra G.S."/>
            <person name="Quail M.A."/>
            <person name="Harris D.E."/>
            <person name="von Herbay A."/>
            <person name="Goble A."/>
            <person name="Rutter S."/>
            <person name="Squares R."/>
            <person name="Squares S."/>
            <person name="Barrell B.G."/>
            <person name="Parkhill J."/>
            <person name="Relman D.A."/>
        </authorList>
    </citation>
    <scope>NUCLEOTIDE SEQUENCE [LARGE SCALE GENOMIC DNA]</scope>
    <source>
        <strain>TW08/27</strain>
    </source>
</reference>
<keyword id="KW-0687">Ribonucleoprotein</keyword>
<keyword id="KW-0689">Ribosomal protein</keyword>
<keyword id="KW-0694">RNA-binding</keyword>
<keyword id="KW-0699">rRNA-binding</keyword>
<name>RS18_TROW8</name>
<comment type="function">
    <text evidence="1">Binds as a heterodimer with protein bS6 to the central domain of the 16S rRNA, where it helps stabilize the platform of the 30S subunit.</text>
</comment>
<comment type="subunit">
    <text evidence="1">Part of the 30S ribosomal subunit. Forms a tight heterodimer with protein bS6.</text>
</comment>
<comment type="similarity">
    <text evidence="1">Belongs to the bacterial ribosomal protein bS18 family.</text>
</comment>
<sequence length="83" mass="9266">MGYRAKGRRQPKADSVVAPPKRVSIKGLDYKDLASLKRFLSDRGKIRARRVTGASIQQQRQIAKAIKNAREMGVIPFKSGVSR</sequence>